<feature type="chain" id="PRO_0000166654" description="Phosphoenolpyruvate carboxylase">
    <location>
        <begin position="1"/>
        <end position="878"/>
    </location>
</feature>
<feature type="active site" evidence="1">
    <location>
        <position position="137"/>
    </location>
</feature>
<feature type="active site" evidence="1">
    <location>
        <position position="545"/>
    </location>
</feature>
<feature type="sequence conflict" description="In Ref. 3; AAS63291." evidence="2" ref="3">
    <original>S</original>
    <variation>N</variation>
    <location>
        <position position="669"/>
    </location>
</feature>
<protein>
    <recommendedName>
        <fullName evidence="1">Phosphoenolpyruvate carboxylase</fullName>
        <shortName evidence="1">PEPC</shortName>
        <shortName evidence="1">PEPCase</shortName>
        <ecNumber evidence="1">4.1.1.31</ecNumber>
    </recommendedName>
</protein>
<evidence type="ECO:0000255" key="1">
    <source>
        <dbReference type="HAMAP-Rule" id="MF_00595"/>
    </source>
</evidence>
<evidence type="ECO:0000305" key="2"/>
<organism>
    <name type="scientific">Yersinia pestis</name>
    <dbReference type="NCBI Taxonomy" id="632"/>
    <lineage>
        <taxon>Bacteria</taxon>
        <taxon>Pseudomonadati</taxon>
        <taxon>Pseudomonadota</taxon>
        <taxon>Gammaproteobacteria</taxon>
        <taxon>Enterobacterales</taxon>
        <taxon>Yersiniaceae</taxon>
        <taxon>Yersinia</taxon>
    </lineage>
</organism>
<comment type="function">
    <text evidence="1">Forms oxaloacetate, a four-carbon dicarboxylic acid source for the tricarboxylic acid cycle.</text>
</comment>
<comment type="catalytic activity">
    <reaction evidence="1">
        <text>oxaloacetate + phosphate = phosphoenolpyruvate + hydrogencarbonate</text>
        <dbReference type="Rhea" id="RHEA:28370"/>
        <dbReference type="ChEBI" id="CHEBI:16452"/>
        <dbReference type="ChEBI" id="CHEBI:17544"/>
        <dbReference type="ChEBI" id="CHEBI:43474"/>
        <dbReference type="ChEBI" id="CHEBI:58702"/>
        <dbReference type="EC" id="4.1.1.31"/>
    </reaction>
</comment>
<comment type="cofactor">
    <cofactor evidence="1">
        <name>Mg(2+)</name>
        <dbReference type="ChEBI" id="CHEBI:18420"/>
    </cofactor>
</comment>
<comment type="similarity">
    <text evidence="1">Belongs to the PEPCase type 1 family.</text>
</comment>
<comment type="sequence caution" evidence="2">
    <conflict type="erroneous initiation">
        <sequence resource="EMBL-CDS" id="AAM83899"/>
    </conflict>
</comment>
<comment type="sequence caution" evidence="2">
    <conflict type="erroneous initiation">
        <sequence resource="EMBL-CDS" id="AAS63291"/>
    </conflict>
</comment>
<accession>Q8ZA84</accession>
<accession>Q0WA86</accession>
<sequence length="878" mass="98324">MNEQYSAMRSNVSMLGTLLGDTIKEALGEHILDRVETIRKLSKSSRAGNEASRQELLTTLQNLSNDELLPVARAFSQFLNLTNTAEQYHSISPHGEAASNPEALAQLFTRLKDKKLSDQDMRSAVDDLSIELVLTAHPTEITRRTLIHKLVEVNTCLSQLDHNDLADYERNKIMRRLRQLVAQSWHTDEIRKLRPSPVDEAKWGFAVVENSLWEGVPAFLREFNEQLENSLDYRLPVEAVPIRFTSWMGGDRDGNPNVTAEITRHVLLLSRWKATDLFLRDIQVLVSELSMSECTPELRELAGGEEVLEPYRQLMKNVRTQLTNTQAYLEARLKGERVLPPHDLLVSNDQLWEPLYACYQSLKACGMEIIANGQLLDTLRRVRCFGVPLVRIDVRQESTRHTDAIAELTRYLGLGDYESWSESDKQAFLVRELNSKRPLVPLKWEPSAETQEVLETCRVIAEAPQGSIAAYVISMAKVPSDVLAVHLLLKEAGCPFTLPVAPLFETLDDLNNADDVMTQLLGIDWYRGLIQGKQMVMIGYSDSAKDAGVMAASWAQYRAQDALIKTCEKAGITLTLFHGRGGSIGRGGAPAHAALLSQPPGSLKGGLRVTEQGEMIRFKFGLPEVTISSLALYAGAILEANLLPPPEPKKEWIEVMDLLSDASCDMYRSYVRENPEFVRYFRAATPELELGKLPLGSRPAKRRPDGGVESLRAIPWIFAWTQNRLMLPAWLGAGAGLQRAIDAGKQDVLATMCRDWPFFSTRIGMLEMVFAKADLWLAEYYDQRLVDKSLWPLGQQLRDQLAADIKVVLAIANDDHLMADLPWIAESIALRNVYTDPLNVLQAELLHRSRQQEHPDACVEQALMVTIAGVAAGMRNTG</sequence>
<name>CAPP_YERPE</name>
<gene>
    <name evidence="1" type="primary">ppc</name>
    <name type="ordered locus">YPO3929</name>
    <name type="ordered locus">y0308</name>
    <name type="ordered locus">YP_3121</name>
</gene>
<reference key="1">
    <citation type="journal article" date="2001" name="Nature">
        <title>Genome sequence of Yersinia pestis, the causative agent of plague.</title>
        <authorList>
            <person name="Parkhill J."/>
            <person name="Wren B.W."/>
            <person name="Thomson N.R."/>
            <person name="Titball R.W."/>
            <person name="Holden M.T.G."/>
            <person name="Prentice M.B."/>
            <person name="Sebaihia M."/>
            <person name="James K.D."/>
            <person name="Churcher C.M."/>
            <person name="Mungall K.L."/>
            <person name="Baker S."/>
            <person name="Basham D."/>
            <person name="Bentley S.D."/>
            <person name="Brooks K."/>
            <person name="Cerdeno-Tarraga A.-M."/>
            <person name="Chillingworth T."/>
            <person name="Cronin A."/>
            <person name="Davies R.M."/>
            <person name="Davis P."/>
            <person name="Dougan G."/>
            <person name="Feltwell T."/>
            <person name="Hamlin N."/>
            <person name="Holroyd S."/>
            <person name="Jagels K."/>
            <person name="Karlyshev A.V."/>
            <person name="Leather S."/>
            <person name="Moule S."/>
            <person name="Oyston P.C.F."/>
            <person name="Quail M.A."/>
            <person name="Rutherford K.M."/>
            <person name="Simmonds M."/>
            <person name="Skelton J."/>
            <person name="Stevens K."/>
            <person name="Whitehead S."/>
            <person name="Barrell B.G."/>
        </authorList>
    </citation>
    <scope>NUCLEOTIDE SEQUENCE [LARGE SCALE GENOMIC DNA]</scope>
    <source>
        <strain>CO-92 / Biovar Orientalis</strain>
    </source>
</reference>
<reference key="2">
    <citation type="journal article" date="2002" name="J. Bacteriol.">
        <title>Genome sequence of Yersinia pestis KIM.</title>
        <authorList>
            <person name="Deng W."/>
            <person name="Burland V."/>
            <person name="Plunkett G. III"/>
            <person name="Boutin A."/>
            <person name="Mayhew G.F."/>
            <person name="Liss P."/>
            <person name="Perna N.T."/>
            <person name="Rose D.J."/>
            <person name="Mau B."/>
            <person name="Zhou S."/>
            <person name="Schwartz D.C."/>
            <person name="Fetherston J.D."/>
            <person name="Lindler L.E."/>
            <person name="Brubaker R.R."/>
            <person name="Plano G.V."/>
            <person name="Straley S.C."/>
            <person name="McDonough K.A."/>
            <person name="Nilles M.L."/>
            <person name="Matson J.S."/>
            <person name="Blattner F.R."/>
            <person name="Perry R.D."/>
        </authorList>
    </citation>
    <scope>NUCLEOTIDE SEQUENCE [LARGE SCALE GENOMIC DNA]</scope>
    <source>
        <strain>KIM10+ / Biovar Mediaevalis</strain>
    </source>
</reference>
<reference key="3">
    <citation type="journal article" date="2004" name="DNA Res.">
        <title>Complete genome sequence of Yersinia pestis strain 91001, an isolate avirulent to humans.</title>
        <authorList>
            <person name="Song Y."/>
            <person name="Tong Z."/>
            <person name="Wang J."/>
            <person name="Wang L."/>
            <person name="Guo Z."/>
            <person name="Han Y."/>
            <person name="Zhang J."/>
            <person name="Pei D."/>
            <person name="Zhou D."/>
            <person name="Qin H."/>
            <person name="Pang X."/>
            <person name="Han Y."/>
            <person name="Zhai J."/>
            <person name="Li M."/>
            <person name="Cui B."/>
            <person name="Qi Z."/>
            <person name="Jin L."/>
            <person name="Dai R."/>
            <person name="Chen F."/>
            <person name="Li S."/>
            <person name="Ye C."/>
            <person name="Du Z."/>
            <person name="Lin W."/>
            <person name="Wang J."/>
            <person name="Yu J."/>
            <person name="Yang H."/>
            <person name="Wang J."/>
            <person name="Huang P."/>
            <person name="Yang R."/>
        </authorList>
    </citation>
    <scope>NUCLEOTIDE SEQUENCE [LARGE SCALE GENOMIC DNA]</scope>
    <source>
        <strain>91001 / Biovar Mediaevalis</strain>
    </source>
</reference>
<proteinExistence type="inferred from homology"/>
<keyword id="KW-0120">Carbon dioxide fixation</keyword>
<keyword id="KW-0456">Lyase</keyword>
<keyword id="KW-0460">Magnesium</keyword>
<keyword id="KW-1185">Reference proteome</keyword>
<dbReference type="EC" id="4.1.1.31" evidence="1"/>
<dbReference type="EMBL" id="AL590842">
    <property type="protein sequence ID" value="CAL22512.1"/>
    <property type="molecule type" value="Genomic_DNA"/>
</dbReference>
<dbReference type="EMBL" id="AE009952">
    <property type="protein sequence ID" value="AAM83899.1"/>
    <property type="status" value="ALT_INIT"/>
    <property type="molecule type" value="Genomic_DNA"/>
</dbReference>
<dbReference type="EMBL" id="AE017042">
    <property type="protein sequence ID" value="AAS63291.1"/>
    <property type="status" value="ALT_INIT"/>
    <property type="molecule type" value="Genomic_DNA"/>
</dbReference>
<dbReference type="PIR" id="AE0478">
    <property type="entry name" value="AE0478"/>
</dbReference>
<dbReference type="RefSeq" id="WP_002209491.1">
    <property type="nucleotide sequence ID" value="NZ_WUCM01000072.1"/>
</dbReference>
<dbReference type="RefSeq" id="YP_002348802.1">
    <property type="nucleotide sequence ID" value="NC_003143.1"/>
</dbReference>
<dbReference type="SMR" id="Q8ZA84"/>
<dbReference type="IntAct" id="Q8ZA84">
    <property type="interactions" value="5"/>
</dbReference>
<dbReference type="STRING" id="214092.YPO3929"/>
<dbReference type="PaxDb" id="214092-YPO3929"/>
<dbReference type="EnsemblBacteria" id="AAS63291">
    <property type="protein sequence ID" value="AAS63291"/>
    <property type="gene ID" value="YP_3121"/>
</dbReference>
<dbReference type="GeneID" id="57974773"/>
<dbReference type="KEGG" id="ype:YPO3929"/>
<dbReference type="KEGG" id="ypk:y0308"/>
<dbReference type="KEGG" id="ypm:YP_3121"/>
<dbReference type="PATRIC" id="fig|214092.21.peg.4457"/>
<dbReference type="eggNOG" id="COG2352">
    <property type="taxonomic scope" value="Bacteria"/>
</dbReference>
<dbReference type="HOGENOM" id="CLU_006557_2_0_6"/>
<dbReference type="OrthoDB" id="9768133at2"/>
<dbReference type="Proteomes" id="UP000000815">
    <property type="component" value="Chromosome"/>
</dbReference>
<dbReference type="Proteomes" id="UP000001019">
    <property type="component" value="Chromosome"/>
</dbReference>
<dbReference type="Proteomes" id="UP000002490">
    <property type="component" value="Chromosome"/>
</dbReference>
<dbReference type="GO" id="GO:0005829">
    <property type="term" value="C:cytosol"/>
    <property type="evidence" value="ECO:0000318"/>
    <property type="project" value="GO_Central"/>
</dbReference>
<dbReference type="GO" id="GO:0000287">
    <property type="term" value="F:magnesium ion binding"/>
    <property type="evidence" value="ECO:0007669"/>
    <property type="project" value="UniProtKB-UniRule"/>
</dbReference>
<dbReference type="GO" id="GO:0008964">
    <property type="term" value="F:phosphoenolpyruvate carboxylase activity"/>
    <property type="evidence" value="ECO:0000318"/>
    <property type="project" value="GO_Central"/>
</dbReference>
<dbReference type="GO" id="GO:0015977">
    <property type="term" value="P:carbon fixation"/>
    <property type="evidence" value="ECO:0007669"/>
    <property type="project" value="UniProtKB-UniRule"/>
</dbReference>
<dbReference type="GO" id="GO:0006107">
    <property type="term" value="P:oxaloacetate metabolic process"/>
    <property type="evidence" value="ECO:0007669"/>
    <property type="project" value="UniProtKB-UniRule"/>
</dbReference>
<dbReference type="GO" id="GO:0006099">
    <property type="term" value="P:tricarboxylic acid cycle"/>
    <property type="evidence" value="ECO:0007669"/>
    <property type="project" value="InterPro"/>
</dbReference>
<dbReference type="FunFam" id="1.20.1440.90:FF:000002">
    <property type="entry name" value="Phosphoenolpyruvate carboxylase"/>
    <property type="match status" value="1"/>
</dbReference>
<dbReference type="Gene3D" id="1.20.1440.90">
    <property type="entry name" value="Phosphoenolpyruvate/pyruvate domain"/>
    <property type="match status" value="1"/>
</dbReference>
<dbReference type="HAMAP" id="MF_00595">
    <property type="entry name" value="PEPcase_type1"/>
    <property type="match status" value="1"/>
</dbReference>
<dbReference type="InterPro" id="IPR021135">
    <property type="entry name" value="PEP_COase"/>
</dbReference>
<dbReference type="InterPro" id="IPR022805">
    <property type="entry name" value="PEP_COase_bac/pln-type"/>
</dbReference>
<dbReference type="InterPro" id="IPR018129">
    <property type="entry name" value="PEP_COase_Lys_AS"/>
</dbReference>
<dbReference type="InterPro" id="IPR033129">
    <property type="entry name" value="PEPCASE_His_AS"/>
</dbReference>
<dbReference type="InterPro" id="IPR015813">
    <property type="entry name" value="Pyrv/PenolPyrv_kinase-like_dom"/>
</dbReference>
<dbReference type="NCBIfam" id="NF000584">
    <property type="entry name" value="PRK00009.1"/>
    <property type="match status" value="1"/>
</dbReference>
<dbReference type="PANTHER" id="PTHR30523">
    <property type="entry name" value="PHOSPHOENOLPYRUVATE CARBOXYLASE"/>
    <property type="match status" value="1"/>
</dbReference>
<dbReference type="PANTHER" id="PTHR30523:SF6">
    <property type="entry name" value="PHOSPHOENOLPYRUVATE CARBOXYLASE"/>
    <property type="match status" value="1"/>
</dbReference>
<dbReference type="Pfam" id="PF00311">
    <property type="entry name" value="PEPcase"/>
    <property type="match status" value="1"/>
</dbReference>
<dbReference type="PRINTS" id="PR00150">
    <property type="entry name" value="PEPCARBXLASE"/>
</dbReference>
<dbReference type="SUPFAM" id="SSF51621">
    <property type="entry name" value="Phosphoenolpyruvate/pyruvate domain"/>
    <property type="match status" value="1"/>
</dbReference>
<dbReference type="PROSITE" id="PS00781">
    <property type="entry name" value="PEPCASE_1"/>
    <property type="match status" value="1"/>
</dbReference>
<dbReference type="PROSITE" id="PS00393">
    <property type="entry name" value="PEPCASE_2"/>
    <property type="match status" value="1"/>
</dbReference>